<organism>
    <name type="scientific">Mus musculus</name>
    <name type="common">Mouse</name>
    <dbReference type="NCBI Taxonomy" id="10090"/>
    <lineage>
        <taxon>Eukaryota</taxon>
        <taxon>Metazoa</taxon>
        <taxon>Chordata</taxon>
        <taxon>Craniata</taxon>
        <taxon>Vertebrata</taxon>
        <taxon>Euteleostomi</taxon>
        <taxon>Mammalia</taxon>
        <taxon>Eutheria</taxon>
        <taxon>Euarchontoglires</taxon>
        <taxon>Glires</taxon>
        <taxon>Rodentia</taxon>
        <taxon>Myomorpha</taxon>
        <taxon>Muroidea</taxon>
        <taxon>Muridae</taxon>
        <taxon>Murinae</taxon>
        <taxon>Mus</taxon>
        <taxon>Mus</taxon>
    </lineage>
</organism>
<gene>
    <name type="primary">Mrgprx2</name>
    <name type="synonym">Mrgprb10</name>
</gene>
<keyword id="KW-1003">Cell membrane</keyword>
<keyword id="KW-0297">G-protein coupled receptor</keyword>
<keyword id="KW-0325">Glycoprotein</keyword>
<keyword id="KW-0472">Membrane</keyword>
<keyword id="KW-0675">Receptor</keyword>
<keyword id="KW-1185">Reference proteome</keyword>
<keyword id="KW-0807">Transducer</keyword>
<keyword id="KW-0812">Transmembrane</keyword>
<keyword id="KW-1133">Transmembrane helix</keyword>
<accession>Q3UG50</accession>
<accession>E9PV62</accession>
<accession>W8W3J9</accession>
<protein>
    <recommendedName>
        <fullName>Mas-related G-protein coupled receptor member X2</fullName>
    </recommendedName>
    <alternativeName>
        <fullName>Mas-related G-protein coupled receptor member B10</fullName>
    </alternativeName>
</protein>
<feature type="chain" id="PRO_0000303886" description="Mas-related G-protein coupled receptor member X2">
    <location>
        <begin position="1"/>
        <end position="352"/>
    </location>
</feature>
<feature type="topological domain" description="Extracellular" evidence="2">
    <location>
        <begin position="1"/>
        <end position="45"/>
    </location>
</feature>
<feature type="transmembrane region" description="Helical; Name=1" evidence="2">
    <location>
        <begin position="46"/>
        <end position="66"/>
    </location>
</feature>
<feature type="topological domain" description="Cytoplasmic" evidence="2">
    <location>
        <begin position="67"/>
        <end position="75"/>
    </location>
</feature>
<feature type="transmembrane region" description="Helical; Name=2" evidence="2">
    <location>
        <begin position="76"/>
        <end position="96"/>
    </location>
</feature>
<feature type="topological domain" description="Extracellular" evidence="2">
    <location>
        <begin position="97"/>
        <end position="107"/>
    </location>
</feature>
<feature type="transmembrane region" description="Helical; Name=3" evidence="2">
    <location>
        <begin position="108"/>
        <end position="128"/>
    </location>
</feature>
<feature type="topological domain" description="Cytoplasmic" evidence="2">
    <location>
        <begin position="129"/>
        <end position="155"/>
    </location>
</feature>
<feature type="transmembrane region" description="Helical; Name=4" evidence="2">
    <location>
        <begin position="156"/>
        <end position="176"/>
    </location>
</feature>
<feature type="topological domain" description="Extracellular" evidence="2">
    <location>
        <begin position="177"/>
        <end position="195"/>
    </location>
</feature>
<feature type="transmembrane region" description="Helical; Name=5" evidence="2">
    <location>
        <begin position="196"/>
        <end position="216"/>
    </location>
</feature>
<feature type="topological domain" description="Cytoplasmic" evidence="2">
    <location>
        <begin position="217"/>
        <end position="239"/>
    </location>
</feature>
<feature type="transmembrane region" description="Helical; Name=6" evidence="2">
    <location>
        <begin position="240"/>
        <end position="260"/>
    </location>
</feature>
<feature type="topological domain" description="Extracellular" evidence="2">
    <location>
        <begin position="261"/>
        <end position="275"/>
    </location>
</feature>
<feature type="transmembrane region" description="Helical; Name=7" evidence="2">
    <location>
        <begin position="276"/>
        <end position="296"/>
    </location>
</feature>
<feature type="topological domain" description="Cytoplasmic" evidence="2">
    <location>
        <begin position="297"/>
        <end position="347"/>
    </location>
</feature>
<feature type="glycosylation site" description="N-linked (GlcNAc...) asparagine" evidence="2">
    <location>
        <position position="5"/>
    </location>
</feature>
<feature type="glycosylation site" description="N-linked (GlcNAc...) asparagine" evidence="2">
    <location>
        <position position="16"/>
    </location>
</feature>
<feature type="glycosylation site" description="N-linked (GlcNAc...) asparagine" evidence="2">
    <location>
        <position position="23"/>
    </location>
</feature>
<feature type="glycosylation site" description="N-linked (GlcNAc...) asparagine" evidence="2">
    <location>
        <position position="28"/>
    </location>
</feature>
<feature type="glycosylation site" description="N-linked (GlcNAc...) asparagine" evidence="2">
    <location>
        <position position="31"/>
    </location>
</feature>
<feature type="sequence conflict" description="In Ref. 2; BAE28359." evidence="4" ref="2">
    <original>I</original>
    <variation>V</variation>
    <location>
        <position position="203"/>
    </location>
</feature>
<proteinExistence type="evidence at transcript level"/>
<sequence length="352" mass="40304">MEERNISGRDLRVDSNITYWGTNITAVNESNHTGMSFCEVVSCTMVFLSLIVALVGLVGNATVLWFLGFQMRRNAFSVYILNLAGADFLFICFQIGYCFHMILDIDSIPIEIDLFYLVVLNFPYFCGLSILSAISIERCLSVMWPIWYHCQRPRHTSAVICTLLWVLSLVCSLLEGKECGFLYYTSDPGWCKTFDLITATWLIVLFVALLGSSLALVITIFWGLHKIPVTRLYVAIVFTVLVFLLFGLPYGIYWFLLVWIEKFYYVLPCSIYPVTVFLSCVNSSAKPIIYCLVGSIRHHRFQRKTLKLFLQRAMQDTPEEEECGEMGSSGRSREIKTIWKGLRAALIRHKEL</sequence>
<reference key="1">
    <citation type="journal article" date="2014" name="Gene">
        <title>Comparative genomic analysis of eutherian Mas-related G protein-coupled receptor genes.</title>
        <authorList>
            <person name="Premzl M."/>
        </authorList>
    </citation>
    <scope>NUCLEOTIDE SEQUENCE [GENOMIC DNA]</scope>
</reference>
<reference key="2">
    <citation type="journal article" date="2005" name="Science">
        <title>The transcriptional landscape of the mammalian genome.</title>
        <authorList>
            <person name="Carninci P."/>
            <person name="Kasukawa T."/>
            <person name="Katayama S."/>
            <person name="Gough J."/>
            <person name="Frith M.C."/>
            <person name="Maeda N."/>
            <person name="Oyama R."/>
            <person name="Ravasi T."/>
            <person name="Lenhard B."/>
            <person name="Wells C."/>
            <person name="Kodzius R."/>
            <person name="Shimokawa K."/>
            <person name="Bajic V.B."/>
            <person name="Brenner S.E."/>
            <person name="Batalov S."/>
            <person name="Forrest A.R."/>
            <person name="Zavolan M."/>
            <person name="Davis M.J."/>
            <person name="Wilming L.G."/>
            <person name="Aidinis V."/>
            <person name="Allen J.E."/>
            <person name="Ambesi-Impiombato A."/>
            <person name="Apweiler R."/>
            <person name="Aturaliya R.N."/>
            <person name="Bailey T.L."/>
            <person name="Bansal M."/>
            <person name="Baxter L."/>
            <person name="Beisel K.W."/>
            <person name="Bersano T."/>
            <person name="Bono H."/>
            <person name="Chalk A.M."/>
            <person name="Chiu K.P."/>
            <person name="Choudhary V."/>
            <person name="Christoffels A."/>
            <person name="Clutterbuck D.R."/>
            <person name="Crowe M.L."/>
            <person name="Dalla E."/>
            <person name="Dalrymple B.P."/>
            <person name="de Bono B."/>
            <person name="Della Gatta G."/>
            <person name="di Bernardo D."/>
            <person name="Down T."/>
            <person name="Engstrom P."/>
            <person name="Fagiolini M."/>
            <person name="Faulkner G."/>
            <person name="Fletcher C.F."/>
            <person name="Fukushima T."/>
            <person name="Furuno M."/>
            <person name="Futaki S."/>
            <person name="Gariboldi M."/>
            <person name="Georgii-Hemming P."/>
            <person name="Gingeras T.R."/>
            <person name="Gojobori T."/>
            <person name="Green R.E."/>
            <person name="Gustincich S."/>
            <person name="Harbers M."/>
            <person name="Hayashi Y."/>
            <person name="Hensch T.K."/>
            <person name="Hirokawa N."/>
            <person name="Hill D."/>
            <person name="Huminiecki L."/>
            <person name="Iacono M."/>
            <person name="Ikeo K."/>
            <person name="Iwama A."/>
            <person name="Ishikawa T."/>
            <person name="Jakt M."/>
            <person name="Kanapin A."/>
            <person name="Katoh M."/>
            <person name="Kawasawa Y."/>
            <person name="Kelso J."/>
            <person name="Kitamura H."/>
            <person name="Kitano H."/>
            <person name="Kollias G."/>
            <person name="Krishnan S.P."/>
            <person name="Kruger A."/>
            <person name="Kummerfeld S.K."/>
            <person name="Kurochkin I.V."/>
            <person name="Lareau L.F."/>
            <person name="Lazarevic D."/>
            <person name="Lipovich L."/>
            <person name="Liu J."/>
            <person name="Liuni S."/>
            <person name="McWilliam S."/>
            <person name="Madan Babu M."/>
            <person name="Madera M."/>
            <person name="Marchionni L."/>
            <person name="Matsuda H."/>
            <person name="Matsuzawa S."/>
            <person name="Miki H."/>
            <person name="Mignone F."/>
            <person name="Miyake S."/>
            <person name="Morris K."/>
            <person name="Mottagui-Tabar S."/>
            <person name="Mulder N."/>
            <person name="Nakano N."/>
            <person name="Nakauchi H."/>
            <person name="Ng P."/>
            <person name="Nilsson R."/>
            <person name="Nishiguchi S."/>
            <person name="Nishikawa S."/>
            <person name="Nori F."/>
            <person name="Ohara O."/>
            <person name="Okazaki Y."/>
            <person name="Orlando V."/>
            <person name="Pang K.C."/>
            <person name="Pavan W.J."/>
            <person name="Pavesi G."/>
            <person name="Pesole G."/>
            <person name="Petrovsky N."/>
            <person name="Piazza S."/>
            <person name="Reed J."/>
            <person name="Reid J.F."/>
            <person name="Ring B.Z."/>
            <person name="Ringwald M."/>
            <person name="Rost B."/>
            <person name="Ruan Y."/>
            <person name="Salzberg S.L."/>
            <person name="Sandelin A."/>
            <person name="Schneider C."/>
            <person name="Schoenbach C."/>
            <person name="Sekiguchi K."/>
            <person name="Semple C.A."/>
            <person name="Seno S."/>
            <person name="Sessa L."/>
            <person name="Sheng Y."/>
            <person name="Shibata Y."/>
            <person name="Shimada H."/>
            <person name="Shimada K."/>
            <person name="Silva D."/>
            <person name="Sinclair B."/>
            <person name="Sperling S."/>
            <person name="Stupka E."/>
            <person name="Sugiura K."/>
            <person name="Sultana R."/>
            <person name="Takenaka Y."/>
            <person name="Taki K."/>
            <person name="Tammoja K."/>
            <person name="Tan S.L."/>
            <person name="Tang S."/>
            <person name="Taylor M.S."/>
            <person name="Tegner J."/>
            <person name="Teichmann S.A."/>
            <person name="Ueda H.R."/>
            <person name="van Nimwegen E."/>
            <person name="Verardo R."/>
            <person name="Wei C.L."/>
            <person name="Yagi K."/>
            <person name="Yamanishi H."/>
            <person name="Zabarovsky E."/>
            <person name="Zhu S."/>
            <person name="Zimmer A."/>
            <person name="Hide W."/>
            <person name="Bult C."/>
            <person name="Grimmond S.M."/>
            <person name="Teasdale R.D."/>
            <person name="Liu E.T."/>
            <person name="Brusic V."/>
            <person name="Quackenbush J."/>
            <person name="Wahlestedt C."/>
            <person name="Mattick J.S."/>
            <person name="Hume D.A."/>
            <person name="Kai C."/>
            <person name="Sasaki D."/>
            <person name="Tomaru Y."/>
            <person name="Fukuda S."/>
            <person name="Kanamori-Katayama M."/>
            <person name="Suzuki M."/>
            <person name="Aoki J."/>
            <person name="Arakawa T."/>
            <person name="Iida J."/>
            <person name="Imamura K."/>
            <person name="Itoh M."/>
            <person name="Kato T."/>
            <person name="Kawaji H."/>
            <person name="Kawagashira N."/>
            <person name="Kawashima T."/>
            <person name="Kojima M."/>
            <person name="Kondo S."/>
            <person name="Konno H."/>
            <person name="Nakano K."/>
            <person name="Ninomiya N."/>
            <person name="Nishio T."/>
            <person name="Okada M."/>
            <person name="Plessy C."/>
            <person name="Shibata K."/>
            <person name="Shiraki T."/>
            <person name="Suzuki S."/>
            <person name="Tagami M."/>
            <person name="Waki K."/>
            <person name="Watahiki A."/>
            <person name="Okamura-Oho Y."/>
            <person name="Suzuki H."/>
            <person name="Kawai J."/>
            <person name="Hayashizaki Y."/>
        </authorList>
    </citation>
    <scope>NUCLEOTIDE SEQUENCE [LARGE SCALE MRNA]</scope>
    <source>
        <strain>C57BL/6J</strain>
    </source>
</reference>
<reference key="3">
    <citation type="journal article" date="2009" name="PLoS Biol.">
        <title>Lineage-specific biology revealed by a finished genome assembly of the mouse.</title>
        <authorList>
            <person name="Church D.M."/>
            <person name="Goodstadt L."/>
            <person name="Hillier L.W."/>
            <person name="Zody M.C."/>
            <person name="Goldstein S."/>
            <person name="She X."/>
            <person name="Bult C.J."/>
            <person name="Agarwala R."/>
            <person name="Cherry J.L."/>
            <person name="DiCuccio M."/>
            <person name="Hlavina W."/>
            <person name="Kapustin Y."/>
            <person name="Meric P."/>
            <person name="Maglott D."/>
            <person name="Birtle Z."/>
            <person name="Marques A.C."/>
            <person name="Graves T."/>
            <person name="Zhou S."/>
            <person name="Teague B."/>
            <person name="Potamousis K."/>
            <person name="Churas C."/>
            <person name="Place M."/>
            <person name="Herschleb J."/>
            <person name="Runnheim R."/>
            <person name="Forrest D."/>
            <person name="Amos-Landgraf J."/>
            <person name="Schwartz D.C."/>
            <person name="Cheng Z."/>
            <person name="Lindblad-Toh K."/>
            <person name="Eichler E.E."/>
            <person name="Ponting C.P."/>
        </authorList>
    </citation>
    <scope>NUCLEOTIDE SEQUENCE [LARGE SCALE GENOMIC DNA]</scope>
    <source>
        <strain>C57BL/6J</strain>
    </source>
</reference>
<name>MRGX2_MOUSE</name>
<comment type="function">
    <text evidence="1">Orphan receptor. Probably involved in the function of nociceptive neurons. May regulate nociceptor function and/or development, including the sensation or modulation of pain (By similarity).</text>
</comment>
<comment type="subcellular location">
    <subcellularLocation>
        <location>Cell membrane</location>
        <topology evidence="2">Multi-pass membrane protein</topology>
    </subcellularLocation>
</comment>
<comment type="similarity">
    <text evidence="3">Belongs to the G-protein coupled receptor 1 family. Mas subfamily.</text>
</comment>
<comment type="caution">
    <text evidence="4">In spite of its official gene name, this protein may not be the functional ortholog of human MRGPRX2.</text>
</comment>
<comment type="sequence caution" evidence="4">
    <conflict type="erroneous gene model prediction">
        <sequence resource="EMBL-CDS" id="CDG86230"/>
    </conflict>
</comment>
<evidence type="ECO:0000250" key="1"/>
<evidence type="ECO:0000255" key="2"/>
<evidence type="ECO:0000255" key="3">
    <source>
        <dbReference type="PROSITE-ProRule" id="PRU00521"/>
    </source>
</evidence>
<evidence type="ECO:0000305" key="4"/>
<dbReference type="EMBL" id="HG426112">
    <property type="protein sequence ID" value="CDG86230.1"/>
    <property type="status" value="ALT_SEQ"/>
    <property type="molecule type" value="Genomic_DNA"/>
</dbReference>
<dbReference type="EMBL" id="AK148121">
    <property type="protein sequence ID" value="BAE28359.1"/>
    <property type="molecule type" value="mRNA"/>
</dbReference>
<dbReference type="EMBL" id="AC115742">
    <property type="status" value="NOT_ANNOTATED_CDS"/>
    <property type="molecule type" value="Genomic_DNA"/>
</dbReference>
<dbReference type="CCDS" id="CCDS52258.1"/>
<dbReference type="RefSeq" id="NP_001030040.2">
    <property type="nucleotide sequence ID" value="NM_001034868.3"/>
</dbReference>
<dbReference type="SMR" id="Q3UG50"/>
<dbReference type="FunCoup" id="Q3UG50">
    <property type="interactions" value="1"/>
</dbReference>
<dbReference type="STRING" id="10090.ENSMUSP00000127022"/>
<dbReference type="GlyCosmos" id="Q3UG50">
    <property type="glycosylation" value="5 sites, No reported glycans"/>
</dbReference>
<dbReference type="GlyGen" id="Q3UG50">
    <property type="glycosylation" value="5 sites"/>
</dbReference>
<dbReference type="PaxDb" id="10090-ENSMUSP00000127022"/>
<dbReference type="Ensembl" id="ENSMUST00000098433.5">
    <property type="protein sequence ID" value="ENSMUSP00000127022.2"/>
    <property type="gene ID" value="ENSMUSG00000074109.5"/>
</dbReference>
<dbReference type="GeneID" id="243978"/>
<dbReference type="KEGG" id="mmu:243978"/>
<dbReference type="UCSC" id="uc009har.2">
    <property type="organism name" value="mouse"/>
</dbReference>
<dbReference type="AGR" id="MGI:3588270"/>
<dbReference type="CTD" id="117194"/>
<dbReference type="MGI" id="MGI:3588270">
    <property type="gene designation" value="Mrgprx2"/>
</dbReference>
<dbReference type="VEuPathDB" id="HostDB:ENSMUSG00000074109"/>
<dbReference type="eggNOG" id="ENOG502RTWA">
    <property type="taxonomic scope" value="Eukaryota"/>
</dbReference>
<dbReference type="GeneTree" id="ENSGT01030000234639"/>
<dbReference type="HOGENOM" id="CLU_009579_4_1_1"/>
<dbReference type="InParanoid" id="Q3UG50"/>
<dbReference type="OMA" id="NESNHTG"/>
<dbReference type="OrthoDB" id="9631784at2759"/>
<dbReference type="PhylomeDB" id="Q3UG50"/>
<dbReference type="TreeFam" id="TF336336"/>
<dbReference type="BioGRID-ORCS" id="243978">
    <property type="hits" value="0 hits in 77 CRISPR screens"/>
</dbReference>
<dbReference type="ChiTaRS" id="Mrgprx2">
    <property type="organism name" value="mouse"/>
</dbReference>
<dbReference type="PRO" id="PR:Q3UG50"/>
<dbReference type="Proteomes" id="UP000000589">
    <property type="component" value="Chromosome 7"/>
</dbReference>
<dbReference type="RNAct" id="Q3UG50">
    <property type="molecule type" value="protein"/>
</dbReference>
<dbReference type="Bgee" id="ENSMUSG00000074109">
    <property type="expression patterns" value="Expressed in hindlimb stylopod muscle and 4 other cell types or tissues"/>
</dbReference>
<dbReference type="ExpressionAtlas" id="Q3UG50">
    <property type="expression patterns" value="differential"/>
</dbReference>
<dbReference type="GO" id="GO:0005886">
    <property type="term" value="C:plasma membrane"/>
    <property type="evidence" value="ECO:0007669"/>
    <property type="project" value="UniProtKB-SubCell"/>
</dbReference>
<dbReference type="GO" id="GO:1990595">
    <property type="term" value="F:mast cell secretagogue receptor activity"/>
    <property type="evidence" value="ECO:0000314"/>
    <property type="project" value="UniProtKB"/>
</dbReference>
<dbReference type="GO" id="GO:0045576">
    <property type="term" value="P:mast cell activation"/>
    <property type="evidence" value="ECO:0000314"/>
    <property type="project" value="UniProtKB"/>
</dbReference>
<dbReference type="GO" id="GO:0043303">
    <property type="term" value="P:mast cell degranulation"/>
    <property type="evidence" value="ECO:0000250"/>
    <property type="project" value="UniProtKB"/>
</dbReference>
<dbReference type="CDD" id="cd15107">
    <property type="entry name" value="7tmA_MrgprB"/>
    <property type="match status" value="1"/>
</dbReference>
<dbReference type="FunFam" id="1.20.1070.10:FF:000140">
    <property type="entry name" value="Mas-related G-protein coupled receptor member X2"/>
    <property type="match status" value="1"/>
</dbReference>
<dbReference type="Gene3D" id="1.20.1070.10">
    <property type="entry name" value="Rhodopsin 7-helix transmembrane proteins"/>
    <property type="match status" value="1"/>
</dbReference>
<dbReference type="InterPro" id="IPR000276">
    <property type="entry name" value="GPCR_Rhodpsn"/>
</dbReference>
<dbReference type="InterPro" id="IPR017452">
    <property type="entry name" value="GPCR_Rhodpsn_7TM"/>
</dbReference>
<dbReference type="InterPro" id="IPR026234">
    <property type="entry name" value="MRGPCRFAMILY"/>
</dbReference>
<dbReference type="PANTHER" id="PTHR11334">
    <property type="entry name" value="MAS-RELATED G-PROTEIN COUPLED RECEPTOR"/>
    <property type="match status" value="1"/>
</dbReference>
<dbReference type="PANTHER" id="PTHR11334:SF66">
    <property type="entry name" value="MAS-RELATED G-PROTEIN COUPLED RECEPTOR MEMBER B1-RELATED"/>
    <property type="match status" value="1"/>
</dbReference>
<dbReference type="Pfam" id="PF00001">
    <property type="entry name" value="7tm_1"/>
    <property type="match status" value="1"/>
</dbReference>
<dbReference type="PRINTS" id="PR00237">
    <property type="entry name" value="GPCRRHODOPSN"/>
</dbReference>
<dbReference type="PRINTS" id="PR02108">
    <property type="entry name" value="MRGPCRFAMILY"/>
</dbReference>
<dbReference type="SUPFAM" id="SSF81321">
    <property type="entry name" value="Family A G protein-coupled receptor-like"/>
    <property type="match status" value="1"/>
</dbReference>
<dbReference type="PROSITE" id="PS00237">
    <property type="entry name" value="G_PROTEIN_RECEP_F1_1"/>
    <property type="match status" value="1"/>
</dbReference>
<dbReference type="PROSITE" id="PS50262">
    <property type="entry name" value="G_PROTEIN_RECEP_F1_2"/>
    <property type="match status" value="1"/>
</dbReference>